<dbReference type="EC" id="3.4.11.1" evidence="1"/>
<dbReference type="EC" id="3.4.11.10" evidence="1"/>
<dbReference type="EMBL" id="CP001407">
    <property type="protein sequence ID" value="ACO29472.1"/>
    <property type="molecule type" value="Genomic_DNA"/>
</dbReference>
<dbReference type="RefSeq" id="WP_000487987.1">
    <property type="nucleotide sequence ID" value="NZ_CP009318.1"/>
</dbReference>
<dbReference type="SMR" id="C1EX85"/>
<dbReference type="MEROPS" id="M17.010"/>
<dbReference type="KEGG" id="bcx:BCA_5059"/>
<dbReference type="PATRIC" id="fig|572264.18.peg.4981"/>
<dbReference type="Proteomes" id="UP000002210">
    <property type="component" value="Chromosome"/>
</dbReference>
<dbReference type="GO" id="GO:0005737">
    <property type="term" value="C:cytoplasm"/>
    <property type="evidence" value="ECO:0007669"/>
    <property type="project" value="UniProtKB-SubCell"/>
</dbReference>
<dbReference type="GO" id="GO:0030145">
    <property type="term" value="F:manganese ion binding"/>
    <property type="evidence" value="ECO:0007669"/>
    <property type="project" value="UniProtKB-UniRule"/>
</dbReference>
<dbReference type="GO" id="GO:0070006">
    <property type="term" value="F:metalloaminopeptidase activity"/>
    <property type="evidence" value="ECO:0007669"/>
    <property type="project" value="InterPro"/>
</dbReference>
<dbReference type="GO" id="GO:0006508">
    <property type="term" value="P:proteolysis"/>
    <property type="evidence" value="ECO:0007669"/>
    <property type="project" value="UniProtKB-KW"/>
</dbReference>
<dbReference type="CDD" id="cd00433">
    <property type="entry name" value="Peptidase_M17"/>
    <property type="match status" value="1"/>
</dbReference>
<dbReference type="Gene3D" id="3.40.220.10">
    <property type="entry name" value="Leucine Aminopeptidase, subunit E, domain 1"/>
    <property type="match status" value="1"/>
</dbReference>
<dbReference type="Gene3D" id="3.40.630.10">
    <property type="entry name" value="Zn peptidases"/>
    <property type="match status" value="1"/>
</dbReference>
<dbReference type="HAMAP" id="MF_00181">
    <property type="entry name" value="Cytosol_peptidase_M17"/>
    <property type="match status" value="1"/>
</dbReference>
<dbReference type="InterPro" id="IPR011356">
    <property type="entry name" value="Leucine_aapep/pepB"/>
</dbReference>
<dbReference type="InterPro" id="IPR043472">
    <property type="entry name" value="Macro_dom-like"/>
</dbReference>
<dbReference type="InterPro" id="IPR000819">
    <property type="entry name" value="Peptidase_M17_C"/>
</dbReference>
<dbReference type="InterPro" id="IPR023042">
    <property type="entry name" value="Peptidase_M17_leu_NH2_pept"/>
</dbReference>
<dbReference type="InterPro" id="IPR008283">
    <property type="entry name" value="Peptidase_M17_N"/>
</dbReference>
<dbReference type="NCBIfam" id="NF002073">
    <property type="entry name" value="PRK00913.1-2"/>
    <property type="match status" value="1"/>
</dbReference>
<dbReference type="NCBIfam" id="NF002074">
    <property type="entry name" value="PRK00913.1-4"/>
    <property type="match status" value="1"/>
</dbReference>
<dbReference type="NCBIfam" id="NF002083">
    <property type="entry name" value="PRK00913.3-5"/>
    <property type="match status" value="1"/>
</dbReference>
<dbReference type="PANTHER" id="PTHR11963:SF23">
    <property type="entry name" value="CYTOSOL AMINOPEPTIDASE"/>
    <property type="match status" value="1"/>
</dbReference>
<dbReference type="PANTHER" id="PTHR11963">
    <property type="entry name" value="LEUCINE AMINOPEPTIDASE-RELATED"/>
    <property type="match status" value="1"/>
</dbReference>
<dbReference type="Pfam" id="PF00883">
    <property type="entry name" value="Peptidase_M17"/>
    <property type="match status" value="1"/>
</dbReference>
<dbReference type="Pfam" id="PF02789">
    <property type="entry name" value="Peptidase_M17_N"/>
    <property type="match status" value="1"/>
</dbReference>
<dbReference type="PRINTS" id="PR00481">
    <property type="entry name" value="LAMNOPPTDASE"/>
</dbReference>
<dbReference type="SUPFAM" id="SSF52949">
    <property type="entry name" value="Macro domain-like"/>
    <property type="match status" value="1"/>
</dbReference>
<dbReference type="SUPFAM" id="SSF53187">
    <property type="entry name" value="Zn-dependent exopeptidases"/>
    <property type="match status" value="1"/>
</dbReference>
<dbReference type="PROSITE" id="PS00631">
    <property type="entry name" value="CYTOSOL_AP"/>
    <property type="match status" value="1"/>
</dbReference>
<keyword id="KW-0031">Aminopeptidase</keyword>
<keyword id="KW-0963">Cytoplasm</keyword>
<keyword id="KW-0378">Hydrolase</keyword>
<keyword id="KW-0464">Manganese</keyword>
<keyword id="KW-0479">Metal-binding</keyword>
<keyword id="KW-0645">Protease</keyword>
<reference key="1">
    <citation type="submission" date="2009-02" db="EMBL/GenBank/DDBJ databases">
        <title>Genome sequence of Bacillus cereus 03BB102.</title>
        <authorList>
            <person name="Dodson R.J."/>
            <person name="Jackson P."/>
            <person name="Munk A.C."/>
            <person name="Brettin T."/>
            <person name="Bruce D."/>
            <person name="Detter C."/>
            <person name="Tapia R."/>
            <person name="Han C."/>
            <person name="Sutton G."/>
            <person name="Sims D."/>
        </authorList>
    </citation>
    <scope>NUCLEOTIDE SEQUENCE [LARGE SCALE GENOMIC DNA]</scope>
    <source>
        <strain>03BB102</strain>
    </source>
</reference>
<comment type="function">
    <text evidence="1">Presumably involved in the processing and regular turnover of intracellular proteins. Catalyzes the removal of unsubstituted N-terminal amino acids from various peptides.</text>
</comment>
<comment type="catalytic activity">
    <reaction evidence="1">
        <text>Release of an N-terminal amino acid, Xaa-|-Yaa-, in which Xaa is preferably Leu, but may be other amino acids including Pro although not Arg or Lys, and Yaa may be Pro. Amino acid amides and methyl esters are also readily hydrolyzed, but rates on arylamides are exceedingly low.</text>
        <dbReference type="EC" id="3.4.11.1"/>
    </reaction>
</comment>
<comment type="catalytic activity">
    <reaction evidence="1">
        <text>Release of an N-terminal amino acid, preferentially leucine, but not glutamic or aspartic acids.</text>
        <dbReference type="EC" id="3.4.11.10"/>
    </reaction>
</comment>
<comment type="cofactor">
    <cofactor evidence="1">
        <name>Mn(2+)</name>
        <dbReference type="ChEBI" id="CHEBI:29035"/>
    </cofactor>
    <text evidence="1">Binds 2 manganese ions per subunit.</text>
</comment>
<comment type="subcellular location">
    <subcellularLocation>
        <location evidence="1">Cytoplasm</location>
    </subcellularLocation>
</comment>
<comment type="similarity">
    <text evidence="1">Belongs to the peptidase M17 family.</text>
</comment>
<name>AMPA_BACC3</name>
<protein>
    <recommendedName>
        <fullName evidence="1">Probable cytosol aminopeptidase</fullName>
        <ecNumber evidence="1">3.4.11.1</ecNumber>
    </recommendedName>
    <alternativeName>
        <fullName evidence="1">Leucine aminopeptidase</fullName>
        <shortName evidence="1">LAP</shortName>
        <ecNumber evidence="1">3.4.11.10</ecNumber>
    </alternativeName>
    <alternativeName>
        <fullName evidence="1">Leucyl aminopeptidase</fullName>
    </alternativeName>
</protein>
<proteinExistence type="inferred from homology"/>
<organism>
    <name type="scientific">Bacillus cereus (strain 03BB102)</name>
    <dbReference type="NCBI Taxonomy" id="572264"/>
    <lineage>
        <taxon>Bacteria</taxon>
        <taxon>Bacillati</taxon>
        <taxon>Bacillota</taxon>
        <taxon>Bacilli</taxon>
        <taxon>Bacillales</taxon>
        <taxon>Bacillaceae</taxon>
        <taxon>Bacillus</taxon>
        <taxon>Bacillus cereus group</taxon>
    </lineage>
</organism>
<accession>C1EX85</accession>
<sequence>MFQVQKELASHEAVVVALFEEEKTSSFVQELDKAFEGQLQVLLEEKELSTKKKAISKVHSLGKTDVKRYYFVGLGKKESYTTETLRSALGKTFKTLQAAKVQDAAILLDSFVTEKLDAIDVAHIAAEVQGLGTYELQTYKSDKKDRVKLEKFTAITAEDAQEIEAALTVGYVHGRATNSARTLVNMPPNVLTATKLAEYAVELAEKYDMDYKVLEKEEMEELGMGALLAVNQGSVEPPKMIALIYKGKEEWTDVIGFVGKGITYDTGGYSLKPREGMVGMKGDMGGAAAVLGAMEIIGELRPEQNVIAVIPSTDNVVSGTAFKPDDVITSMSGKTIEVLNTDAEGRLALADGITYAKKLGANYLIDVATLTGGVIVALGNHTTGAMTNNEELFEQVLEASMETDESIWQLPIFDRDKERVRNSKFADLNNSPGREGHAVMAGTFIGEFAEDTPWVHLDIAGTSESSGAHDLGPAGATGAMVRTLATLVERFGEE</sequence>
<feature type="chain" id="PRO_1000192705" description="Probable cytosol aminopeptidase">
    <location>
        <begin position="1"/>
        <end position="494"/>
    </location>
</feature>
<feature type="active site" evidence="1">
    <location>
        <position position="272"/>
    </location>
</feature>
<feature type="active site" evidence="1">
    <location>
        <position position="346"/>
    </location>
</feature>
<feature type="binding site" evidence="1">
    <location>
        <position position="260"/>
    </location>
    <ligand>
        <name>Mn(2+)</name>
        <dbReference type="ChEBI" id="CHEBI:29035"/>
        <label>2</label>
    </ligand>
</feature>
<feature type="binding site" evidence="1">
    <location>
        <position position="265"/>
    </location>
    <ligand>
        <name>Mn(2+)</name>
        <dbReference type="ChEBI" id="CHEBI:29035"/>
        <label>1</label>
    </ligand>
</feature>
<feature type="binding site" evidence="1">
    <location>
        <position position="265"/>
    </location>
    <ligand>
        <name>Mn(2+)</name>
        <dbReference type="ChEBI" id="CHEBI:29035"/>
        <label>2</label>
    </ligand>
</feature>
<feature type="binding site" evidence="1">
    <location>
        <position position="283"/>
    </location>
    <ligand>
        <name>Mn(2+)</name>
        <dbReference type="ChEBI" id="CHEBI:29035"/>
        <label>2</label>
    </ligand>
</feature>
<feature type="binding site" evidence="1">
    <location>
        <position position="342"/>
    </location>
    <ligand>
        <name>Mn(2+)</name>
        <dbReference type="ChEBI" id="CHEBI:29035"/>
        <label>1</label>
    </ligand>
</feature>
<feature type="binding site" evidence="1">
    <location>
        <position position="344"/>
    </location>
    <ligand>
        <name>Mn(2+)</name>
        <dbReference type="ChEBI" id="CHEBI:29035"/>
        <label>1</label>
    </ligand>
</feature>
<feature type="binding site" evidence="1">
    <location>
        <position position="344"/>
    </location>
    <ligand>
        <name>Mn(2+)</name>
        <dbReference type="ChEBI" id="CHEBI:29035"/>
        <label>2</label>
    </ligand>
</feature>
<gene>
    <name evidence="1" type="primary">pepA</name>
    <name type="ordered locus">BCA_5059</name>
</gene>
<evidence type="ECO:0000255" key="1">
    <source>
        <dbReference type="HAMAP-Rule" id="MF_00181"/>
    </source>
</evidence>